<name>NPT2A_SHEEP</name>
<proteinExistence type="evidence at transcript level"/>
<accession>O97704</accession>
<reference key="1">
    <citation type="submission" date="1998-01" db="EMBL/GenBank/DDBJ databases">
        <title>Characterisation of a Na+-dependent phosphate cotransporter from ovine renal outer cortex.</title>
        <authorList>
            <person name="Wood I.S."/>
            <person name="Ford L.T."/>
            <person name="Penny J.I."/>
            <person name="Shirazi-Beechey S.P."/>
        </authorList>
    </citation>
    <scope>NUCLEOTIDE SEQUENCE [MRNA]</scope>
    <source>
        <tissue>Kidney cortex</tissue>
    </source>
</reference>
<sequence length="639" mass="69023">MISYGENLGGRAVSPLPVRGGHMMHGAAFAYVPSPQVLHRIPGTSAYGFPSVGPMALPEHGCPYGEVVEHHDPLPAKLALEDERKPEPGLIQKLRRAGVTLLKVPLMLSFLYLFVCSLDVLSSAFQLAGGKVAGDIFKDNAILSNPVAGLVVGILVTVLVQSSSTSTSIVVSMVSSGLLEVSSAIPIIMGSNIGTSVTNTIVALMQAGDRTDFRRAFAGATVHDCFNWLSVLVLLPLEAATGYLHHITRLVVASFNIRGGRDAPDLLKIITEPFTKLIIQLDKSVITSLASGDESLRNHSLIRVWCYPNPTEVPTPMPRAEANTSRMLRNATLEKCNHIFVDTGLPDLAVGLILLAGSLALLCTCLILLVKMLNSLLKGQVAKVIQKVINTDFPTPFTWATGYFAMVVGASMTFVVQSSSVFTSAITPLIGLGVISIERAYPLTLGSNIGTTTTAILAALASPREKLSSAFQIALCHFFFNISGILLWYPVPCTRLPIRMAKALGKRTAKYRWFAVLYLLLCFLLLPSMVFGLSMAGWRAMVGVGAPFGALLAFVVLVSALQHRSPGCLPKWLQTWDFLPLWVHSLKPLDHLITRATLCCARPEPRSPPLPTRVFLEELPPATPSPRLAMPHHHDATRL</sequence>
<protein>
    <recommendedName>
        <fullName>Sodium-dependent phosphate transport protein 2A</fullName>
        <shortName>Sodium-phosphate transport protein 2A</shortName>
    </recommendedName>
    <alternativeName>
        <fullName>Na(+)-dependent phosphate cotransporter 2A</fullName>
    </alternativeName>
    <alternativeName>
        <fullName>Sodium/phosphate cotransporter 2A</fullName>
        <shortName>Na(+)/Pi cotransporter 2A</shortName>
        <shortName>NaPi-2a</shortName>
    </alternativeName>
    <alternativeName>
        <fullName evidence="1">Solute carrier family 34 member 1</fullName>
    </alternativeName>
</protein>
<keyword id="KW-1003">Cell membrane</keyword>
<keyword id="KW-1015">Disulfide bond</keyword>
<keyword id="KW-0325">Glycoprotein</keyword>
<keyword id="KW-0406">Ion transport</keyword>
<keyword id="KW-0472">Membrane</keyword>
<keyword id="KW-0597">Phosphoprotein</keyword>
<keyword id="KW-1185">Reference proteome</keyword>
<keyword id="KW-0915">Sodium</keyword>
<keyword id="KW-0739">Sodium transport</keyword>
<keyword id="KW-0769">Symport</keyword>
<keyword id="KW-0812">Transmembrane</keyword>
<keyword id="KW-1133">Transmembrane helix</keyword>
<keyword id="KW-0813">Transport</keyword>
<evidence type="ECO:0000250" key="1">
    <source>
        <dbReference type="UniProtKB" id="Q06495"/>
    </source>
</evidence>
<evidence type="ECO:0000250" key="2">
    <source>
        <dbReference type="UniProtKB" id="Q06496"/>
    </source>
</evidence>
<evidence type="ECO:0000250" key="3">
    <source>
        <dbReference type="UniProtKB" id="Q60825"/>
    </source>
</evidence>
<evidence type="ECO:0000255" key="4"/>
<evidence type="ECO:0000305" key="5"/>
<gene>
    <name evidence="1" type="primary">SLC34A1</name>
    <name evidence="3" type="synonym">NPT2</name>
    <name evidence="1" type="synonym">SLC17A2</name>
</gene>
<dbReference type="EMBL" id="AJ001385">
    <property type="protein sequence ID" value="CAA04715.1"/>
    <property type="molecule type" value="mRNA"/>
</dbReference>
<dbReference type="RefSeq" id="NP_001009450.1">
    <property type="nucleotide sequence ID" value="NM_001009450.1"/>
</dbReference>
<dbReference type="STRING" id="9940.ENSOARP00000005056"/>
<dbReference type="GlyCosmos" id="O97704">
    <property type="glycosylation" value="3 sites, No reported glycans"/>
</dbReference>
<dbReference type="PaxDb" id="9940-ENSOARP00000005056"/>
<dbReference type="GeneID" id="443505"/>
<dbReference type="KEGG" id="oas:443505"/>
<dbReference type="CTD" id="6569"/>
<dbReference type="eggNOG" id="ENOG502QQ3I">
    <property type="taxonomic scope" value="Eukaryota"/>
</dbReference>
<dbReference type="OrthoDB" id="76259at2759"/>
<dbReference type="Proteomes" id="UP000002356">
    <property type="component" value="Unplaced"/>
</dbReference>
<dbReference type="GO" id="GO:0016324">
    <property type="term" value="C:apical plasma membrane"/>
    <property type="evidence" value="ECO:0000250"/>
    <property type="project" value="UniProtKB"/>
</dbReference>
<dbReference type="GO" id="GO:0005903">
    <property type="term" value="C:brush border"/>
    <property type="evidence" value="ECO:0007669"/>
    <property type="project" value="TreeGrafter"/>
</dbReference>
<dbReference type="GO" id="GO:0005886">
    <property type="term" value="C:plasma membrane"/>
    <property type="evidence" value="ECO:0000250"/>
    <property type="project" value="UniProtKB"/>
</dbReference>
<dbReference type="GO" id="GO:0031982">
    <property type="term" value="C:vesicle"/>
    <property type="evidence" value="ECO:0007669"/>
    <property type="project" value="TreeGrafter"/>
</dbReference>
<dbReference type="GO" id="GO:0005436">
    <property type="term" value="F:sodium:phosphate symporter activity"/>
    <property type="evidence" value="ECO:0000250"/>
    <property type="project" value="UniProtKB"/>
</dbReference>
<dbReference type="GO" id="GO:0030643">
    <property type="term" value="P:intracellular phosphate ion homeostasis"/>
    <property type="evidence" value="ECO:0007669"/>
    <property type="project" value="TreeGrafter"/>
</dbReference>
<dbReference type="GO" id="GO:0055062">
    <property type="term" value="P:phosphate ion homeostasis"/>
    <property type="evidence" value="ECO:0000250"/>
    <property type="project" value="UniProtKB"/>
</dbReference>
<dbReference type="GO" id="GO:0006817">
    <property type="term" value="P:phosphate ion transport"/>
    <property type="evidence" value="ECO:0000250"/>
    <property type="project" value="UniProtKB"/>
</dbReference>
<dbReference type="GO" id="GO:0044341">
    <property type="term" value="P:sodium-dependent phosphate transport"/>
    <property type="evidence" value="ECO:0007669"/>
    <property type="project" value="InterPro"/>
</dbReference>
<dbReference type="InterPro" id="IPR003841">
    <property type="entry name" value="Na/Pi_transpt"/>
</dbReference>
<dbReference type="NCBIfam" id="TIGR01013">
    <property type="entry name" value="2a58"/>
    <property type="match status" value="1"/>
</dbReference>
<dbReference type="NCBIfam" id="NF037997">
    <property type="entry name" value="Na_Pi_symport"/>
    <property type="match status" value="2"/>
</dbReference>
<dbReference type="PANTHER" id="PTHR10010:SF21">
    <property type="entry name" value="SODIUM-DEPENDENT PHOSPHATE TRANSPORT PROTEIN 2A"/>
    <property type="match status" value="1"/>
</dbReference>
<dbReference type="PANTHER" id="PTHR10010">
    <property type="entry name" value="SOLUTE CARRIER FAMILY 34 SODIUM PHOSPHATE , MEMBER 2-RELATED"/>
    <property type="match status" value="1"/>
</dbReference>
<dbReference type="Pfam" id="PF02690">
    <property type="entry name" value="Na_Pi_cotrans"/>
    <property type="match status" value="2"/>
</dbReference>
<feature type="chain" id="PRO_0000068611" description="Sodium-dependent phosphate transport protein 2A">
    <location>
        <begin position="1"/>
        <end position="639"/>
    </location>
</feature>
<feature type="topological domain" description="Cytoplasmic" evidence="2">
    <location>
        <begin position="1"/>
        <end position="103"/>
    </location>
</feature>
<feature type="transmembrane region" description="Helical; Name=M1" evidence="4">
    <location>
        <begin position="104"/>
        <end position="125"/>
    </location>
</feature>
<feature type="topological domain" description="Extracellular" evidence="2">
    <location>
        <begin position="126"/>
        <end position="145"/>
    </location>
</feature>
<feature type="transmembrane region" description="Helical; Name=M2" evidence="4">
    <location>
        <begin position="146"/>
        <end position="163"/>
    </location>
</feature>
<feature type="topological domain" description="Cytoplasmic" evidence="2">
    <location>
        <begin position="164"/>
        <end position="165"/>
    </location>
</feature>
<feature type="transmembrane region" description="Helical; Name=M3" evidence="4">
    <location>
        <begin position="166"/>
        <end position="185"/>
    </location>
</feature>
<feature type="topological domain" description="Extracellular" evidence="2">
    <location>
        <begin position="186"/>
        <end position="347"/>
    </location>
</feature>
<feature type="transmembrane region" description="Helical; Name=M4" evidence="4">
    <location>
        <begin position="348"/>
        <end position="370"/>
    </location>
</feature>
<feature type="topological domain" description="Cytoplasmic" evidence="2">
    <location>
        <begin position="371"/>
        <end position="412"/>
    </location>
</feature>
<feature type="transmembrane region" description="Helical; Name=M5" evidence="4">
    <location>
        <begin position="413"/>
        <end position="436"/>
    </location>
</feature>
<feature type="topological domain" description="Extracellular" evidence="2">
    <location>
        <begin position="437"/>
        <end position="466"/>
    </location>
</feature>
<feature type="transmembrane region" description="Helical; Name=M6" evidence="4">
    <location>
        <begin position="467"/>
        <end position="487"/>
    </location>
</feature>
<feature type="topological domain" description="Cytoplasmic" evidence="2">
    <location>
        <begin position="488"/>
        <end position="513"/>
    </location>
</feature>
<feature type="transmembrane region" description="Helical; Name=M7" evidence="4">
    <location>
        <begin position="514"/>
        <end position="534"/>
    </location>
</feature>
<feature type="topological domain" description="Extracellular" evidence="2">
    <location>
        <begin position="535"/>
        <end position="539"/>
    </location>
</feature>
<feature type="transmembrane region" description="Helical; Name=M8" evidence="4">
    <location>
        <begin position="540"/>
        <end position="561"/>
    </location>
</feature>
<feature type="topological domain" description="Cytoplasmic" evidence="2">
    <location>
        <begin position="562"/>
        <end position="639"/>
    </location>
</feature>
<feature type="modified residue" description="Phosphoserine" evidence="2">
    <location>
        <position position="14"/>
    </location>
</feature>
<feature type="modified residue" description="Phosphoserine" evidence="3">
    <location>
        <position position="34"/>
    </location>
</feature>
<feature type="modified residue" description="Phosphothreonine; by PKC" evidence="4">
    <location>
        <position position="508"/>
    </location>
</feature>
<feature type="modified residue" description="Phosphoserine" evidence="2">
    <location>
        <position position="607"/>
    </location>
</feature>
<feature type="modified residue" description="Phosphothreonine" evidence="3">
    <location>
        <position position="623"/>
    </location>
</feature>
<feature type="modified residue" description="Phosphoserine" evidence="3">
    <location>
        <position position="625"/>
    </location>
</feature>
<feature type="glycosylation site" description="N-linked (GlcNAc...) asparagine" evidence="4">
    <location>
        <position position="298"/>
    </location>
</feature>
<feature type="glycosylation site" description="N-linked (GlcNAc...) asparagine" evidence="4">
    <location>
        <position position="323"/>
    </location>
</feature>
<feature type="glycosylation site" description="N-linked (GlcNAc...) asparagine" evidence="4">
    <location>
        <position position="330"/>
    </location>
</feature>
<feature type="disulfide bond" evidence="2">
    <location>
        <begin position="225"/>
        <end position="522"/>
    </location>
</feature>
<feature type="disulfide bond" evidence="2">
    <location>
        <begin position="306"/>
        <end position="336"/>
    </location>
</feature>
<organism>
    <name type="scientific">Ovis aries</name>
    <name type="common">Sheep</name>
    <dbReference type="NCBI Taxonomy" id="9940"/>
    <lineage>
        <taxon>Eukaryota</taxon>
        <taxon>Metazoa</taxon>
        <taxon>Chordata</taxon>
        <taxon>Craniata</taxon>
        <taxon>Vertebrata</taxon>
        <taxon>Euteleostomi</taxon>
        <taxon>Mammalia</taxon>
        <taxon>Eutheria</taxon>
        <taxon>Laurasiatheria</taxon>
        <taxon>Artiodactyla</taxon>
        <taxon>Ruminantia</taxon>
        <taxon>Pecora</taxon>
        <taxon>Bovidae</taxon>
        <taxon>Caprinae</taxon>
        <taxon>Ovis</taxon>
    </lineage>
</organism>
<comment type="function">
    <text evidence="2">Involved in actively transporting phosphate into cells via Na(+) cotransport in the renal brush border membrane. The cotransport has a Na(+):Pi stoichiometry of 3:1 and is electrogenic.</text>
</comment>
<comment type="catalytic activity">
    <reaction evidence="2">
        <text>3 Na(+)(out) + phosphate(out) = 3 Na(+)(in) + phosphate(in)</text>
        <dbReference type="Rhea" id="RHEA:71255"/>
        <dbReference type="ChEBI" id="CHEBI:29101"/>
        <dbReference type="ChEBI" id="CHEBI:43474"/>
    </reaction>
    <physiologicalReaction direction="left-to-right" evidence="2">
        <dbReference type="Rhea" id="RHEA:71256"/>
    </physiologicalReaction>
</comment>
<comment type="subunit">
    <text evidence="1 3">Interacts via its C-terminal region with NHERF4. Interacts with NHERF1. Interacts with TMEM174; regulates SLC34A1 internalization by PTH and FGF23 (By similarity).</text>
</comment>
<comment type="subcellular location">
    <subcellularLocation>
        <location evidence="1">Apical cell membrane</location>
        <topology evidence="4">Multi-pass membrane protein</topology>
    </subcellularLocation>
    <subcellularLocation>
        <location evidence="2">Cell membrane</location>
        <topology evidence="4">Multi-pass membrane protein</topology>
    </subcellularLocation>
    <text evidence="2 3">Localized at the brush border membranes of the proximal tubules. Internalized from the cell surface upon PTH stimulation (By similarity).</text>
</comment>
<comment type="similarity">
    <text evidence="5">Belongs to the SLC34A transporter family.</text>
</comment>